<proteinExistence type="inferred from homology"/>
<sequence>MAGVNEIRSTFLDYFRKNGHEVVPSSPLVPRNDPTLMFTNAGMVQFKNVFTGLEHRSYNRATTSQKCVRAGGKHNDLDNVGYTARHHTFFEMLGNFSFGDYFKEDAISFAWNLITREFGLPKDKLLVTVYHTDDDAANFWKKIAGLSDDRIIRIPTSDNFWAMGDTGPCGPCSEIFYDHGDHIWGGPPGSPEEDGDRFIEIWNLVFMQFEQQTPELRIDLPRPSIDTGMGLERIAAVLQGVHDNYDIDLFKALIRASEEATGVKAEGDFRASHRVIADHLRASSFLIADGVLPSNEGRGYVLRRIMRRAMRHAQLLGAKEPLMWRLLPALIREMGQAYPELIRAESLISETLKLEETRFRKTLERGLGLLSDASENLAEGDRLDGETAFKLYDTYGFPLDLTQDALRQRGIAVDTEGFNVAMERQKAEARANWTGSGEAATETIWFGIKDKVGATEFLGYETESAEGVIASLVRDGVEVPSVREGETISVVVNQTPFYGESGGQQGDTGTISGEGFVIAVKDTQKKGEGVFVHIGEVTEGTAKAGDVVELKVDSARRTRIRSNHSATHLLHEALRETLGTHVAQKGSLVAPDRLRFDFSHPKPISAEELEAVENLANEIILQNAPVTTRLMAVDDAIAEGAMALFGEKYGDEVRVVSMGTAKHGSKAGKAYSVELCGGTHVRQTGDIGLVRIISEGGVAAGVRRLEALTGEAARLYLEEQDERVKAIASALKTTSADVLDRVNALIDERKKLERELADARKKLALGGGSSDGGSAVEAVNGVNFLGKIVTGVSPRDLKPLADEGKKQVGSGVVLFIGVGEDGKASAVAAVTEDMVGRFSAVDLVRAASAALGGAGGGGRPDMAQAGGPDGAKAADAIAAVKALIA</sequence>
<evidence type="ECO:0000255" key="1">
    <source>
        <dbReference type="HAMAP-Rule" id="MF_00036"/>
    </source>
</evidence>
<protein>
    <recommendedName>
        <fullName evidence="1">Alanine--tRNA ligase</fullName>
        <ecNumber evidence="1">6.1.1.7</ecNumber>
    </recommendedName>
    <alternativeName>
        <fullName evidence="1">Alanyl-tRNA synthetase</fullName>
        <shortName evidence="1">AlaRS</shortName>
    </alternativeName>
</protein>
<organism>
    <name type="scientific">Brucella abortus biovar 1 (strain 9-941)</name>
    <dbReference type="NCBI Taxonomy" id="262698"/>
    <lineage>
        <taxon>Bacteria</taxon>
        <taxon>Pseudomonadati</taxon>
        <taxon>Pseudomonadota</taxon>
        <taxon>Alphaproteobacteria</taxon>
        <taxon>Hyphomicrobiales</taxon>
        <taxon>Brucellaceae</taxon>
        <taxon>Brucella/Ochrobactrum group</taxon>
        <taxon>Brucella</taxon>
    </lineage>
</organism>
<reference key="1">
    <citation type="journal article" date="2005" name="J. Bacteriol.">
        <title>Completion of the genome sequence of Brucella abortus and comparison to the highly similar genomes of Brucella melitensis and Brucella suis.</title>
        <authorList>
            <person name="Halling S.M."/>
            <person name="Peterson-Burch B.D."/>
            <person name="Bricker B.J."/>
            <person name="Zuerner R.L."/>
            <person name="Qing Z."/>
            <person name="Li L.-L."/>
            <person name="Kapur V."/>
            <person name="Alt D.P."/>
            <person name="Olsen S.C."/>
        </authorList>
    </citation>
    <scope>NUCLEOTIDE SEQUENCE [LARGE SCALE GENOMIC DNA]</scope>
    <source>
        <strain>9-941</strain>
    </source>
</reference>
<accession>Q57CU0</accession>
<name>SYA_BRUAB</name>
<dbReference type="EC" id="6.1.1.7" evidence="1"/>
<dbReference type="EMBL" id="AE017223">
    <property type="protein sequence ID" value="AAX74544.1"/>
    <property type="molecule type" value="Genomic_DNA"/>
</dbReference>
<dbReference type="RefSeq" id="WP_002964330.1">
    <property type="nucleotide sequence ID" value="NC_006932.1"/>
</dbReference>
<dbReference type="SMR" id="Q57CU0"/>
<dbReference type="EnsemblBacteria" id="AAX74544">
    <property type="protein sequence ID" value="AAX74544"/>
    <property type="gene ID" value="BruAb1_1206"/>
</dbReference>
<dbReference type="GeneID" id="97533555"/>
<dbReference type="KEGG" id="bmb:BruAb1_1206"/>
<dbReference type="HOGENOM" id="CLU_004485_1_1_5"/>
<dbReference type="Proteomes" id="UP000000540">
    <property type="component" value="Chromosome I"/>
</dbReference>
<dbReference type="GO" id="GO:0005829">
    <property type="term" value="C:cytosol"/>
    <property type="evidence" value="ECO:0007669"/>
    <property type="project" value="TreeGrafter"/>
</dbReference>
<dbReference type="GO" id="GO:0004813">
    <property type="term" value="F:alanine-tRNA ligase activity"/>
    <property type="evidence" value="ECO:0007669"/>
    <property type="project" value="UniProtKB-UniRule"/>
</dbReference>
<dbReference type="GO" id="GO:0002161">
    <property type="term" value="F:aminoacyl-tRNA deacylase activity"/>
    <property type="evidence" value="ECO:0007669"/>
    <property type="project" value="TreeGrafter"/>
</dbReference>
<dbReference type="GO" id="GO:0005524">
    <property type="term" value="F:ATP binding"/>
    <property type="evidence" value="ECO:0007669"/>
    <property type="project" value="UniProtKB-UniRule"/>
</dbReference>
<dbReference type="GO" id="GO:0000049">
    <property type="term" value="F:tRNA binding"/>
    <property type="evidence" value="ECO:0007669"/>
    <property type="project" value="UniProtKB-KW"/>
</dbReference>
<dbReference type="GO" id="GO:0008270">
    <property type="term" value="F:zinc ion binding"/>
    <property type="evidence" value="ECO:0007669"/>
    <property type="project" value="UniProtKB-UniRule"/>
</dbReference>
<dbReference type="GO" id="GO:0006419">
    <property type="term" value="P:alanyl-tRNA aminoacylation"/>
    <property type="evidence" value="ECO:0007669"/>
    <property type="project" value="UniProtKB-UniRule"/>
</dbReference>
<dbReference type="GO" id="GO:0045892">
    <property type="term" value="P:negative regulation of DNA-templated transcription"/>
    <property type="evidence" value="ECO:0007669"/>
    <property type="project" value="TreeGrafter"/>
</dbReference>
<dbReference type="CDD" id="cd00673">
    <property type="entry name" value="AlaRS_core"/>
    <property type="match status" value="1"/>
</dbReference>
<dbReference type="FunFam" id="2.40.30.130:FF:000001">
    <property type="entry name" value="Alanine--tRNA ligase"/>
    <property type="match status" value="1"/>
</dbReference>
<dbReference type="FunFam" id="3.10.310.40:FF:000001">
    <property type="entry name" value="Alanine--tRNA ligase"/>
    <property type="match status" value="1"/>
</dbReference>
<dbReference type="FunFam" id="3.30.54.20:FF:000001">
    <property type="entry name" value="Alanine--tRNA ligase"/>
    <property type="match status" value="1"/>
</dbReference>
<dbReference type="FunFam" id="3.30.930.10:FF:000004">
    <property type="entry name" value="Alanine--tRNA ligase"/>
    <property type="match status" value="1"/>
</dbReference>
<dbReference type="FunFam" id="3.30.980.10:FF:000004">
    <property type="entry name" value="Alanine--tRNA ligase, cytoplasmic"/>
    <property type="match status" value="1"/>
</dbReference>
<dbReference type="Gene3D" id="2.40.30.130">
    <property type="match status" value="1"/>
</dbReference>
<dbReference type="Gene3D" id="3.10.310.40">
    <property type="match status" value="1"/>
</dbReference>
<dbReference type="Gene3D" id="3.30.54.20">
    <property type="match status" value="1"/>
</dbReference>
<dbReference type="Gene3D" id="6.10.250.550">
    <property type="match status" value="1"/>
</dbReference>
<dbReference type="Gene3D" id="3.30.930.10">
    <property type="entry name" value="Bira Bifunctional Protein, Domain 2"/>
    <property type="match status" value="1"/>
</dbReference>
<dbReference type="Gene3D" id="3.30.980.10">
    <property type="entry name" value="Threonyl-trna Synthetase, Chain A, domain 2"/>
    <property type="match status" value="1"/>
</dbReference>
<dbReference type="HAMAP" id="MF_00036_B">
    <property type="entry name" value="Ala_tRNA_synth_B"/>
    <property type="match status" value="1"/>
</dbReference>
<dbReference type="InterPro" id="IPR045864">
    <property type="entry name" value="aa-tRNA-synth_II/BPL/LPL"/>
</dbReference>
<dbReference type="InterPro" id="IPR002318">
    <property type="entry name" value="Ala-tRNA-lgiase_IIc"/>
</dbReference>
<dbReference type="InterPro" id="IPR018162">
    <property type="entry name" value="Ala-tRNA-ligase_IIc_anticod-bd"/>
</dbReference>
<dbReference type="InterPro" id="IPR018165">
    <property type="entry name" value="Ala-tRNA-synth_IIc_core"/>
</dbReference>
<dbReference type="InterPro" id="IPR018164">
    <property type="entry name" value="Ala-tRNA-synth_IIc_N"/>
</dbReference>
<dbReference type="InterPro" id="IPR050058">
    <property type="entry name" value="Ala-tRNA_ligase"/>
</dbReference>
<dbReference type="InterPro" id="IPR023033">
    <property type="entry name" value="Ala_tRNA_ligase_euk/bac"/>
</dbReference>
<dbReference type="InterPro" id="IPR003156">
    <property type="entry name" value="DHHA1_dom"/>
</dbReference>
<dbReference type="InterPro" id="IPR018163">
    <property type="entry name" value="Thr/Ala-tRNA-synth_IIc_edit"/>
</dbReference>
<dbReference type="InterPro" id="IPR009000">
    <property type="entry name" value="Transl_B-barrel_sf"/>
</dbReference>
<dbReference type="InterPro" id="IPR012947">
    <property type="entry name" value="tRNA_SAD"/>
</dbReference>
<dbReference type="NCBIfam" id="TIGR00344">
    <property type="entry name" value="alaS"/>
    <property type="match status" value="1"/>
</dbReference>
<dbReference type="PANTHER" id="PTHR11777:SF9">
    <property type="entry name" value="ALANINE--TRNA LIGASE, CYTOPLASMIC"/>
    <property type="match status" value="1"/>
</dbReference>
<dbReference type="PANTHER" id="PTHR11777">
    <property type="entry name" value="ALANYL-TRNA SYNTHETASE"/>
    <property type="match status" value="1"/>
</dbReference>
<dbReference type="Pfam" id="PF02272">
    <property type="entry name" value="DHHA1"/>
    <property type="match status" value="1"/>
</dbReference>
<dbReference type="Pfam" id="PF01411">
    <property type="entry name" value="tRNA-synt_2c"/>
    <property type="match status" value="1"/>
</dbReference>
<dbReference type="Pfam" id="PF07973">
    <property type="entry name" value="tRNA_SAD"/>
    <property type="match status" value="1"/>
</dbReference>
<dbReference type="PRINTS" id="PR00980">
    <property type="entry name" value="TRNASYNTHALA"/>
</dbReference>
<dbReference type="SMART" id="SM00863">
    <property type="entry name" value="tRNA_SAD"/>
    <property type="match status" value="1"/>
</dbReference>
<dbReference type="SUPFAM" id="SSF55681">
    <property type="entry name" value="Class II aaRS and biotin synthetases"/>
    <property type="match status" value="1"/>
</dbReference>
<dbReference type="SUPFAM" id="SSF101353">
    <property type="entry name" value="Putative anticodon-binding domain of alanyl-tRNA synthetase (AlaRS)"/>
    <property type="match status" value="1"/>
</dbReference>
<dbReference type="SUPFAM" id="SSF55186">
    <property type="entry name" value="ThrRS/AlaRS common domain"/>
    <property type="match status" value="1"/>
</dbReference>
<dbReference type="SUPFAM" id="SSF50447">
    <property type="entry name" value="Translation proteins"/>
    <property type="match status" value="1"/>
</dbReference>
<dbReference type="PROSITE" id="PS50860">
    <property type="entry name" value="AA_TRNA_LIGASE_II_ALA"/>
    <property type="match status" value="1"/>
</dbReference>
<keyword id="KW-0030">Aminoacyl-tRNA synthetase</keyword>
<keyword id="KW-0067">ATP-binding</keyword>
<keyword id="KW-0963">Cytoplasm</keyword>
<keyword id="KW-0436">Ligase</keyword>
<keyword id="KW-0479">Metal-binding</keyword>
<keyword id="KW-0547">Nucleotide-binding</keyword>
<keyword id="KW-0648">Protein biosynthesis</keyword>
<keyword id="KW-0694">RNA-binding</keyword>
<keyword id="KW-0820">tRNA-binding</keyword>
<keyword id="KW-0862">Zinc</keyword>
<gene>
    <name evidence="1" type="primary">alaS</name>
    <name type="ordered locus">BruAb1_1206</name>
</gene>
<feature type="chain" id="PRO_0000075075" description="Alanine--tRNA ligase">
    <location>
        <begin position="1"/>
        <end position="885"/>
    </location>
</feature>
<feature type="binding site" evidence="1">
    <location>
        <position position="564"/>
    </location>
    <ligand>
        <name>Zn(2+)</name>
        <dbReference type="ChEBI" id="CHEBI:29105"/>
    </ligand>
</feature>
<feature type="binding site" evidence="1">
    <location>
        <position position="568"/>
    </location>
    <ligand>
        <name>Zn(2+)</name>
        <dbReference type="ChEBI" id="CHEBI:29105"/>
    </ligand>
</feature>
<feature type="binding site" evidence="1">
    <location>
        <position position="676"/>
    </location>
    <ligand>
        <name>Zn(2+)</name>
        <dbReference type="ChEBI" id="CHEBI:29105"/>
    </ligand>
</feature>
<feature type="binding site" evidence="1">
    <location>
        <position position="680"/>
    </location>
    <ligand>
        <name>Zn(2+)</name>
        <dbReference type="ChEBI" id="CHEBI:29105"/>
    </ligand>
</feature>
<comment type="function">
    <text evidence="1">Catalyzes the attachment of alanine to tRNA(Ala) in a two-step reaction: alanine is first activated by ATP to form Ala-AMP and then transferred to the acceptor end of tRNA(Ala). Also edits incorrectly charged Ser-tRNA(Ala) and Gly-tRNA(Ala) via its editing domain.</text>
</comment>
<comment type="catalytic activity">
    <reaction evidence="1">
        <text>tRNA(Ala) + L-alanine + ATP = L-alanyl-tRNA(Ala) + AMP + diphosphate</text>
        <dbReference type="Rhea" id="RHEA:12540"/>
        <dbReference type="Rhea" id="RHEA-COMP:9657"/>
        <dbReference type="Rhea" id="RHEA-COMP:9923"/>
        <dbReference type="ChEBI" id="CHEBI:30616"/>
        <dbReference type="ChEBI" id="CHEBI:33019"/>
        <dbReference type="ChEBI" id="CHEBI:57972"/>
        <dbReference type="ChEBI" id="CHEBI:78442"/>
        <dbReference type="ChEBI" id="CHEBI:78497"/>
        <dbReference type="ChEBI" id="CHEBI:456215"/>
        <dbReference type="EC" id="6.1.1.7"/>
    </reaction>
</comment>
<comment type="cofactor">
    <cofactor evidence="1">
        <name>Zn(2+)</name>
        <dbReference type="ChEBI" id="CHEBI:29105"/>
    </cofactor>
    <text evidence="1">Binds 1 zinc ion per subunit.</text>
</comment>
<comment type="subcellular location">
    <subcellularLocation>
        <location evidence="1">Cytoplasm</location>
    </subcellularLocation>
</comment>
<comment type="domain">
    <text evidence="1">Consists of three domains; the N-terminal catalytic domain, the editing domain and the C-terminal C-Ala domain. The editing domain removes incorrectly charged amino acids, while the C-Ala domain, along with tRNA(Ala), serves as a bridge to cooperatively bring together the editing and aminoacylation centers thus stimulating deacylation of misacylated tRNAs.</text>
</comment>
<comment type="similarity">
    <text evidence="1">Belongs to the class-II aminoacyl-tRNA synthetase family.</text>
</comment>